<organism>
    <name type="scientific">Rippkaea orientalis (strain PCC 8801 / RF-1)</name>
    <name type="common">Cyanothece sp. (strain PCC 8801)</name>
    <dbReference type="NCBI Taxonomy" id="41431"/>
    <lineage>
        <taxon>Bacteria</taxon>
        <taxon>Bacillati</taxon>
        <taxon>Cyanobacteriota</taxon>
        <taxon>Cyanophyceae</taxon>
        <taxon>Oscillatoriophycideae</taxon>
        <taxon>Chroococcales</taxon>
        <taxon>Aphanothecaceae</taxon>
        <taxon>Rippkaea</taxon>
        <taxon>Rippkaea orientalis</taxon>
    </lineage>
</organism>
<proteinExistence type="inferred from homology"/>
<feature type="chain" id="PRO_1000142250" description="Large ribosomal subunit protein uL22">
    <location>
        <begin position="1"/>
        <end position="120"/>
    </location>
</feature>
<keyword id="KW-1185">Reference proteome</keyword>
<keyword id="KW-0687">Ribonucleoprotein</keyword>
<keyword id="KW-0689">Ribosomal protein</keyword>
<keyword id="KW-0694">RNA-binding</keyword>
<keyword id="KW-0699">rRNA-binding</keyword>
<protein>
    <recommendedName>
        <fullName evidence="1">Large ribosomal subunit protein uL22</fullName>
    </recommendedName>
    <alternativeName>
        <fullName evidence="2">50S ribosomal protein L22</fullName>
    </alternativeName>
</protein>
<comment type="function">
    <text evidence="1">This protein binds specifically to 23S rRNA; its binding is stimulated by other ribosomal proteins, e.g. L4, L17, and L20. It is important during the early stages of 50S assembly. It makes multiple contacts with different domains of the 23S rRNA in the assembled 50S subunit and ribosome (By similarity).</text>
</comment>
<comment type="function">
    <text evidence="1">The globular domain of the protein is located near the polypeptide exit tunnel on the outside of the subunit, while an extended beta-hairpin is found that lines the wall of the exit tunnel in the center of the 70S ribosome.</text>
</comment>
<comment type="subunit">
    <text evidence="1">Part of the 50S ribosomal subunit.</text>
</comment>
<comment type="similarity">
    <text evidence="1">Belongs to the universal ribosomal protein uL22 family.</text>
</comment>
<gene>
    <name evidence="1" type="primary">rplV</name>
    <name evidence="1" type="synonym">rpl22</name>
    <name type="ordered locus">PCC8801_0247</name>
</gene>
<sequence length="120" mass="13548">MAVDTTAEVKAIARYIRMSPHKVRRVLDQIRGRSYREALIILEFMPYRACDPILKVLRSAAANAEHNEGLDRATLVVSQAYADGGPSLRRYRPRAQGRAYQIRKPTCHITVAVAPEITEE</sequence>
<evidence type="ECO:0000255" key="1">
    <source>
        <dbReference type="HAMAP-Rule" id="MF_01331"/>
    </source>
</evidence>
<evidence type="ECO:0000305" key="2"/>
<dbReference type="EMBL" id="CP001287">
    <property type="protein sequence ID" value="ACK64350.1"/>
    <property type="molecule type" value="Genomic_DNA"/>
</dbReference>
<dbReference type="RefSeq" id="WP_012593627.1">
    <property type="nucleotide sequence ID" value="NC_011726.1"/>
</dbReference>
<dbReference type="SMR" id="B7K330"/>
<dbReference type="STRING" id="41431.PCC8801_0247"/>
<dbReference type="KEGG" id="cyp:PCC8801_0247"/>
<dbReference type="eggNOG" id="COG0091">
    <property type="taxonomic scope" value="Bacteria"/>
</dbReference>
<dbReference type="HOGENOM" id="CLU_083987_3_3_3"/>
<dbReference type="OrthoDB" id="9805969at2"/>
<dbReference type="Proteomes" id="UP000008204">
    <property type="component" value="Chromosome"/>
</dbReference>
<dbReference type="GO" id="GO:0022625">
    <property type="term" value="C:cytosolic large ribosomal subunit"/>
    <property type="evidence" value="ECO:0007669"/>
    <property type="project" value="TreeGrafter"/>
</dbReference>
<dbReference type="GO" id="GO:0019843">
    <property type="term" value="F:rRNA binding"/>
    <property type="evidence" value="ECO:0007669"/>
    <property type="project" value="UniProtKB-UniRule"/>
</dbReference>
<dbReference type="GO" id="GO:0003735">
    <property type="term" value="F:structural constituent of ribosome"/>
    <property type="evidence" value="ECO:0007669"/>
    <property type="project" value="InterPro"/>
</dbReference>
<dbReference type="GO" id="GO:0006412">
    <property type="term" value="P:translation"/>
    <property type="evidence" value="ECO:0007669"/>
    <property type="project" value="UniProtKB-UniRule"/>
</dbReference>
<dbReference type="CDD" id="cd00336">
    <property type="entry name" value="Ribosomal_L22"/>
    <property type="match status" value="1"/>
</dbReference>
<dbReference type="FunFam" id="3.90.470.10:FF:000004">
    <property type="entry name" value="50S ribosomal protein L22, chloroplastic"/>
    <property type="match status" value="1"/>
</dbReference>
<dbReference type="Gene3D" id="3.90.470.10">
    <property type="entry name" value="Ribosomal protein L22/L17"/>
    <property type="match status" value="1"/>
</dbReference>
<dbReference type="HAMAP" id="MF_01331_B">
    <property type="entry name" value="Ribosomal_uL22_B"/>
    <property type="match status" value="1"/>
</dbReference>
<dbReference type="InterPro" id="IPR001063">
    <property type="entry name" value="Ribosomal_uL22"/>
</dbReference>
<dbReference type="InterPro" id="IPR005727">
    <property type="entry name" value="Ribosomal_uL22_bac/chlpt-type"/>
</dbReference>
<dbReference type="InterPro" id="IPR047867">
    <property type="entry name" value="Ribosomal_uL22_bac/org-type"/>
</dbReference>
<dbReference type="InterPro" id="IPR018260">
    <property type="entry name" value="Ribosomal_uL22_CS"/>
</dbReference>
<dbReference type="InterPro" id="IPR036394">
    <property type="entry name" value="Ribosomal_uL22_sf"/>
</dbReference>
<dbReference type="NCBIfam" id="TIGR01044">
    <property type="entry name" value="rplV_bact"/>
    <property type="match status" value="1"/>
</dbReference>
<dbReference type="PANTHER" id="PTHR13501">
    <property type="entry name" value="CHLOROPLAST 50S RIBOSOMAL PROTEIN L22-RELATED"/>
    <property type="match status" value="1"/>
</dbReference>
<dbReference type="PANTHER" id="PTHR13501:SF8">
    <property type="entry name" value="LARGE RIBOSOMAL SUBUNIT PROTEIN UL22M"/>
    <property type="match status" value="1"/>
</dbReference>
<dbReference type="Pfam" id="PF00237">
    <property type="entry name" value="Ribosomal_L22"/>
    <property type="match status" value="1"/>
</dbReference>
<dbReference type="SUPFAM" id="SSF54843">
    <property type="entry name" value="Ribosomal protein L22"/>
    <property type="match status" value="1"/>
</dbReference>
<dbReference type="PROSITE" id="PS00464">
    <property type="entry name" value="RIBOSOMAL_L22"/>
    <property type="match status" value="1"/>
</dbReference>
<name>RL22_RIPO1</name>
<reference key="1">
    <citation type="journal article" date="2011" name="MBio">
        <title>Novel metabolic attributes of the genus Cyanothece, comprising a group of unicellular nitrogen-fixing Cyanobacteria.</title>
        <authorList>
            <person name="Bandyopadhyay A."/>
            <person name="Elvitigala T."/>
            <person name="Welsh E."/>
            <person name="Stockel J."/>
            <person name="Liberton M."/>
            <person name="Min H."/>
            <person name="Sherman L.A."/>
            <person name="Pakrasi H.B."/>
        </authorList>
    </citation>
    <scope>NUCLEOTIDE SEQUENCE [LARGE SCALE GENOMIC DNA]</scope>
    <source>
        <strain>PCC 8801 / RF-1</strain>
    </source>
</reference>
<accession>B7K330</accession>